<keyword id="KW-0085">Behavior</keyword>
<keyword id="KW-0325">Glycoprotein</keyword>
<keyword id="KW-0964">Secreted</keyword>
<keyword id="KW-0732">Signal</keyword>
<evidence type="ECO:0000255" key="1"/>
<evidence type="ECO:0000256" key="2">
    <source>
        <dbReference type="SAM" id="MobiDB-lite"/>
    </source>
</evidence>
<proteinExistence type="evidence at transcript level"/>
<protein>
    <recommendedName>
        <fullName>Accessory gland-specific peptide 26Aa</fullName>
    </recommendedName>
    <alternativeName>
        <fullName>Male accessory gland secretory protein 355A</fullName>
    </alternativeName>
</protein>
<gene>
    <name type="primary">Acp26Aa</name>
    <name type="synonym">Mst26Aa</name>
    <name type="synonym">mst355a</name>
</gene>
<name>MS2A_DROSI</name>
<comment type="function">
    <text>This protein is transferred from male to female's hemolymph during mating, affecting egglaying and behavior after mating.</text>
</comment>
<comment type="subcellular location">
    <subcellularLocation>
        <location>Secreted</location>
        <location>Extracellular space</location>
    </subcellularLocation>
</comment>
<comment type="tissue specificity">
    <text>Main cells of the accessory glands of males.</text>
</comment>
<comment type="PTM">
    <text>It undergoes several cleavages as it is secreted and it is further processed in the recipient female.</text>
</comment>
<accession>P33737</accession>
<reference key="1">
    <citation type="journal article" date="1992" name="Genetics">
        <title>Polymorphism and divergence in the Mst26A male accessory gland gene region in Drosophila.</title>
        <authorList>
            <person name="Aguade M."/>
            <person name="Miyashita N."/>
            <person name="Langley C.H."/>
        </authorList>
    </citation>
    <scope>NUCLEOTIDE SEQUENCE [GENOMIC DNA]</scope>
    <source>
        <strain>PC</strain>
    </source>
</reference>
<feature type="signal peptide" evidence="1">
    <location>
        <begin position="1"/>
        <end position="18"/>
    </location>
</feature>
<feature type="chain" id="PRO_0000021757" description="Accessory gland-specific peptide 26Aa">
    <location>
        <begin position="19"/>
        <end position="255"/>
    </location>
</feature>
<feature type="region of interest" description="Disordered" evidence="2">
    <location>
        <begin position="86"/>
        <end position="110"/>
    </location>
</feature>
<feature type="region of interest" description="Disordered" evidence="2">
    <location>
        <begin position="177"/>
        <end position="197"/>
    </location>
</feature>
<feature type="region of interest" description="Disordered" evidence="2">
    <location>
        <begin position="235"/>
        <end position="255"/>
    </location>
</feature>
<feature type="compositionally biased region" description="Polar residues" evidence="2">
    <location>
        <begin position="87"/>
        <end position="110"/>
    </location>
</feature>
<feature type="compositionally biased region" description="Basic residues" evidence="2">
    <location>
        <begin position="183"/>
        <end position="192"/>
    </location>
</feature>
<feature type="compositionally biased region" description="Polar residues" evidence="2">
    <location>
        <begin position="245"/>
        <end position="255"/>
    </location>
</feature>
<feature type="glycosylation site" description="N-linked (GlcNAc...) asparagine" evidence="1">
    <location>
        <position position="88"/>
    </location>
</feature>
<feature type="glycosylation site" description="N-linked (GlcNAc...) asparagine" evidence="1">
    <location>
        <position position="95"/>
    </location>
</feature>
<feature type="glycosylation site" description="N-linked (GlcNAc...) asparagine" evidence="1">
    <location>
        <position position="136"/>
    </location>
</feature>
<dbReference type="EMBL" id="X70899">
    <property type="protein sequence ID" value="CAA50254.1"/>
    <property type="molecule type" value="Genomic_DNA"/>
</dbReference>
<dbReference type="PIR" id="S30429">
    <property type="entry name" value="S30429"/>
</dbReference>
<dbReference type="GlyCosmos" id="P33737">
    <property type="glycosylation" value="3 sites, No reported glycans"/>
</dbReference>
<dbReference type="OrthoDB" id="7870919at2759"/>
<dbReference type="GO" id="GO:0005576">
    <property type="term" value="C:extracellular region"/>
    <property type="evidence" value="ECO:0007669"/>
    <property type="project" value="UniProtKB-SubCell"/>
</dbReference>
<dbReference type="GO" id="GO:0042802">
    <property type="term" value="F:identical protein binding"/>
    <property type="evidence" value="ECO:0007669"/>
    <property type="project" value="EnsemblMetazoa"/>
</dbReference>
<dbReference type="GO" id="GO:0007618">
    <property type="term" value="P:mating"/>
    <property type="evidence" value="ECO:0007669"/>
    <property type="project" value="InterPro"/>
</dbReference>
<dbReference type="GO" id="GO:2000130">
    <property type="term" value="P:positive regulation of octopamine signaling pathway"/>
    <property type="evidence" value="ECO:0007669"/>
    <property type="project" value="EnsemblMetazoa"/>
</dbReference>
<dbReference type="GO" id="GO:0060279">
    <property type="term" value="P:positive regulation of ovulation"/>
    <property type="evidence" value="ECO:0007669"/>
    <property type="project" value="EnsemblMetazoa"/>
</dbReference>
<dbReference type="InterPro" id="IPR004315">
    <property type="entry name" value="Male_ac_gland_sc"/>
</dbReference>
<dbReference type="Pfam" id="PF03082">
    <property type="entry name" value="MAGSP"/>
    <property type="match status" value="1"/>
</dbReference>
<organism>
    <name type="scientific">Drosophila simulans</name>
    <name type="common">Fruit fly</name>
    <dbReference type="NCBI Taxonomy" id="7240"/>
    <lineage>
        <taxon>Eukaryota</taxon>
        <taxon>Metazoa</taxon>
        <taxon>Ecdysozoa</taxon>
        <taxon>Arthropoda</taxon>
        <taxon>Hexapoda</taxon>
        <taxon>Insecta</taxon>
        <taxon>Pterygota</taxon>
        <taxon>Neoptera</taxon>
        <taxon>Endopterygota</taxon>
        <taxon>Diptera</taxon>
        <taxon>Brachycera</taxon>
        <taxon>Muscomorpha</taxon>
        <taxon>Ephydroidea</taxon>
        <taxon>Drosophilidae</taxon>
        <taxon>Drosophila</taxon>
        <taxon>Sophophora</taxon>
    </lineage>
</organism>
<sequence>MNQILLCSQILLLLFAVANCDGEHQLDSSMDLKSDSTKSAVLKNVAPKNDATQAEIAKDDVALKSGKKGDYVMDIDVCTMPLDDYPINNSKSRKNSSTLPSQILTDKPNQGSNQIALKALKHRLLMEQNNNLFLRNHSVSLMNEIEARKTDIIQARQLNIDLELELEALKRKLSEMNAQNARKPTKSCKKRPSKDIAPPANQLQEVIVKNTYRNKYLTLLTQLAQKINYEIANVNNPATDVPTGKSPSEGNPSTT</sequence>